<feature type="chain" id="PRO_1000186429" description="Bifunctional protein GlmU">
    <location>
        <begin position="1"/>
        <end position="456"/>
    </location>
</feature>
<feature type="region of interest" description="Pyrophosphorylase" evidence="1">
    <location>
        <begin position="1"/>
        <end position="229"/>
    </location>
</feature>
<feature type="region of interest" description="Linker" evidence="1">
    <location>
        <begin position="230"/>
        <end position="250"/>
    </location>
</feature>
<feature type="region of interest" description="N-acetyltransferase" evidence="1">
    <location>
        <begin position="251"/>
        <end position="456"/>
    </location>
</feature>
<feature type="active site" description="Proton acceptor" evidence="1">
    <location>
        <position position="362"/>
    </location>
</feature>
<feature type="binding site" evidence="1">
    <location>
        <begin position="8"/>
        <end position="11"/>
    </location>
    <ligand>
        <name>UDP-N-acetyl-alpha-D-glucosamine</name>
        <dbReference type="ChEBI" id="CHEBI:57705"/>
    </ligand>
</feature>
<feature type="binding site" evidence="1">
    <location>
        <position position="22"/>
    </location>
    <ligand>
        <name>UDP-N-acetyl-alpha-D-glucosamine</name>
        <dbReference type="ChEBI" id="CHEBI:57705"/>
    </ligand>
</feature>
<feature type="binding site" evidence="1">
    <location>
        <position position="73"/>
    </location>
    <ligand>
        <name>UDP-N-acetyl-alpha-D-glucosamine</name>
        <dbReference type="ChEBI" id="CHEBI:57705"/>
    </ligand>
</feature>
<feature type="binding site" evidence="1">
    <location>
        <begin position="78"/>
        <end position="79"/>
    </location>
    <ligand>
        <name>UDP-N-acetyl-alpha-D-glucosamine</name>
        <dbReference type="ChEBI" id="CHEBI:57705"/>
    </ligand>
</feature>
<feature type="binding site" evidence="1">
    <location>
        <position position="103"/>
    </location>
    <ligand>
        <name>Mg(2+)</name>
        <dbReference type="ChEBI" id="CHEBI:18420"/>
    </ligand>
</feature>
<feature type="binding site" evidence="1">
    <location>
        <position position="140"/>
    </location>
    <ligand>
        <name>UDP-N-acetyl-alpha-D-glucosamine</name>
        <dbReference type="ChEBI" id="CHEBI:57705"/>
    </ligand>
</feature>
<feature type="binding site" evidence="1">
    <location>
        <position position="155"/>
    </location>
    <ligand>
        <name>UDP-N-acetyl-alpha-D-glucosamine</name>
        <dbReference type="ChEBI" id="CHEBI:57705"/>
    </ligand>
</feature>
<feature type="binding site" evidence="1">
    <location>
        <position position="170"/>
    </location>
    <ligand>
        <name>UDP-N-acetyl-alpha-D-glucosamine</name>
        <dbReference type="ChEBI" id="CHEBI:57705"/>
    </ligand>
</feature>
<feature type="binding site" evidence="1">
    <location>
        <position position="227"/>
    </location>
    <ligand>
        <name>Mg(2+)</name>
        <dbReference type="ChEBI" id="CHEBI:18420"/>
    </ligand>
</feature>
<feature type="binding site" evidence="1">
    <location>
        <position position="227"/>
    </location>
    <ligand>
        <name>UDP-N-acetyl-alpha-D-glucosamine</name>
        <dbReference type="ChEBI" id="CHEBI:57705"/>
    </ligand>
</feature>
<feature type="binding site" evidence="1">
    <location>
        <position position="332"/>
    </location>
    <ligand>
        <name>UDP-N-acetyl-alpha-D-glucosamine</name>
        <dbReference type="ChEBI" id="CHEBI:57705"/>
    </ligand>
</feature>
<feature type="binding site" evidence="1">
    <location>
        <position position="350"/>
    </location>
    <ligand>
        <name>UDP-N-acetyl-alpha-D-glucosamine</name>
        <dbReference type="ChEBI" id="CHEBI:57705"/>
    </ligand>
</feature>
<feature type="binding site" evidence="1">
    <location>
        <position position="365"/>
    </location>
    <ligand>
        <name>UDP-N-acetyl-alpha-D-glucosamine</name>
        <dbReference type="ChEBI" id="CHEBI:57705"/>
    </ligand>
</feature>
<feature type="binding site" evidence="1">
    <location>
        <position position="376"/>
    </location>
    <ligand>
        <name>UDP-N-acetyl-alpha-D-glucosamine</name>
        <dbReference type="ChEBI" id="CHEBI:57705"/>
    </ligand>
</feature>
<feature type="binding site" evidence="1">
    <location>
        <begin position="385"/>
        <end position="386"/>
    </location>
    <ligand>
        <name>acetyl-CoA</name>
        <dbReference type="ChEBI" id="CHEBI:57288"/>
    </ligand>
</feature>
<feature type="binding site" evidence="1">
    <location>
        <position position="422"/>
    </location>
    <ligand>
        <name>acetyl-CoA</name>
        <dbReference type="ChEBI" id="CHEBI:57288"/>
    </ligand>
</feature>
<feature type="binding site" evidence="1">
    <location>
        <position position="439"/>
    </location>
    <ligand>
        <name>acetyl-CoA</name>
        <dbReference type="ChEBI" id="CHEBI:57288"/>
    </ligand>
</feature>
<accession>B9DY47</accession>
<organism>
    <name type="scientific">Clostridium kluyveri (strain NBRC 12016)</name>
    <dbReference type="NCBI Taxonomy" id="583346"/>
    <lineage>
        <taxon>Bacteria</taxon>
        <taxon>Bacillati</taxon>
        <taxon>Bacillota</taxon>
        <taxon>Clostridia</taxon>
        <taxon>Eubacteriales</taxon>
        <taxon>Clostridiaceae</taxon>
        <taxon>Clostridium</taxon>
    </lineage>
</organism>
<sequence length="456" mass="50227">MYNCAIILAAGEGKRMKSSKPKVLHKICGKEMINVVIDVVKKAQIKDINVVIGKNSEKVKKATEVKNTSYSFQDKQLGTGHAVLCASDFLKNKRGIVAVFTGDSPLIKENTIKNMLDFHEAGGYGATILTSIVQNPFGYGRIIREEDEQVLKIVEHKDCLQEELQVKEINSGMYCFDIESLIESLGKIRNNNAQGEYYLTDVIEILKQEGKKIGALPIPFEETMGVNSRVQLAEAEKIMRNRINKIHMENGVTLIDHNNTYIDLDIQIGKDTIIYPGNVFQGDTVIGENCIFYPNSRIQSSVIKDNVTVENSVVLESTIGENTSVGPFAYIRPETTIGKSVKIGDFVEVKKSTIGDNTKVSHLTYIGDAEVGSKCNFGCGTVVVNYNGKNKNKTLIGNNSFIGCNTNLVSPVKVNDNTYIAAGSTITDEVPEGALAIARARQVNKKSWVYKKGLKK</sequence>
<proteinExistence type="inferred from homology"/>
<gene>
    <name evidence="1" type="primary">glmU</name>
    <name type="ordered locus">CKR_0121</name>
</gene>
<comment type="function">
    <text evidence="1">Catalyzes the last two sequential reactions in the de novo biosynthetic pathway for UDP-N-acetylglucosamine (UDP-GlcNAc). The C-terminal domain catalyzes the transfer of acetyl group from acetyl coenzyme A to glucosamine-1-phosphate (GlcN-1-P) to produce N-acetylglucosamine-1-phosphate (GlcNAc-1-P), which is converted into UDP-GlcNAc by the transfer of uridine 5-monophosphate (from uridine 5-triphosphate), a reaction catalyzed by the N-terminal domain.</text>
</comment>
<comment type="catalytic activity">
    <reaction evidence="1">
        <text>alpha-D-glucosamine 1-phosphate + acetyl-CoA = N-acetyl-alpha-D-glucosamine 1-phosphate + CoA + H(+)</text>
        <dbReference type="Rhea" id="RHEA:13725"/>
        <dbReference type="ChEBI" id="CHEBI:15378"/>
        <dbReference type="ChEBI" id="CHEBI:57287"/>
        <dbReference type="ChEBI" id="CHEBI:57288"/>
        <dbReference type="ChEBI" id="CHEBI:57776"/>
        <dbReference type="ChEBI" id="CHEBI:58516"/>
        <dbReference type="EC" id="2.3.1.157"/>
    </reaction>
</comment>
<comment type="catalytic activity">
    <reaction evidence="1">
        <text>N-acetyl-alpha-D-glucosamine 1-phosphate + UTP + H(+) = UDP-N-acetyl-alpha-D-glucosamine + diphosphate</text>
        <dbReference type="Rhea" id="RHEA:13509"/>
        <dbReference type="ChEBI" id="CHEBI:15378"/>
        <dbReference type="ChEBI" id="CHEBI:33019"/>
        <dbReference type="ChEBI" id="CHEBI:46398"/>
        <dbReference type="ChEBI" id="CHEBI:57705"/>
        <dbReference type="ChEBI" id="CHEBI:57776"/>
        <dbReference type="EC" id="2.7.7.23"/>
    </reaction>
</comment>
<comment type="cofactor">
    <cofactor evidence="1">
        <name>Mg(2+)</name>
        <dbReference type="ChEBI" id="CHEBI:18420"/>
    </cofactor>
    <text evidence="1">Binds 1 Mg(2+) ion per subunit.</text>
</comment>
<comment type="pathway">
    <text evidence="1">Nucleotide-sugar biosynthesis; UDP-N-acetyl-alpha-D-glucosamine biosynthesis; N-acetyl-alpha-D-glucosamine 1-phosphate from alpha-D-glucosamine 6-phosphate (route II): step 2/2.</text>
</comment>
<comment type="pathway">
    <text evidence="1">Nucleotide-sugar biosynthesis; UDP-N-acetyl-alpha-D-glucosamine biosynthesis; UDP-N-acetyl-alpha-D-glucosamine from N-acetyl-alpha-D-glucosamine 1-phosphate: step 1/1.</text>
</comment>
<comment type="pathway">
    <text evidence="1">Bacterial outer membrane biogenesis; LPS lipid A biosynthesis.</text>
</comment>
<comment type="subunit">
    <text evidence="1">Homotrimer.</text>
</comment>
<comment type="subcellular location">
    <subcellularLocation>
        <location evidence="1">Cytoplasm</location>
    </subcellularLocation>
</comment>
<comment type="similarity">
    <text evidence="1">In the N-terminal section; belongs to the N-acetylglucosamine-1-phosphate uridyltransferase family.</text>
</comment>
<comment type="similarity">
    <text evidence="1">In the C-terminal section; belongs to the transferase hexapeptide repeat family.</text>
</comment>
<reference key="1">
    <citation type="submission" date="2005-09" db="EMBL/GenBank/DDBJ databases">
        <title>Complete genome sequence of Clostridium kluyveri and comparative genomics of Clostridia species.</title>
        <authorList>
            <person name="Inui M."/>
            <person name="Nonaka H."/>
            <person name="Shinoda Y."/>
            <person name="Ikenaga Y."/>
            <person name="Abe M."/>
            <person name="Naito K."/>
            <person name="Vertes A.A."/>
            <person name="Yukawa H."/>
        </authorList>
    </citation>
    <scope>NUCLEOTIDE SEQUENCE [LARGE SCALE GENOMIC DNA]</scope>
    <source>
        <strain>NBRC 12016</strain>
    </source>
</reference>
<protein>
    <recommendedName>
        <fullName evidence="1">Bifunctional protein GlmU</fullName>
    </recommendedName>
    <domain>
        <recommendedName>
            <fullName evidence="1">UDP-N-acetylglucosamine pyrophosphorylase</fullName>
            <ecNumber evidence="1">2.7.7.23</ecNumber>
        </recommendedName>
        <alternativeName>
            <fullName evidence="1">N-acetylglucosamine-1-phosphate uridyltransferase</fullName>
        </alternativeName>
    </domain>
    <domain>
        <recommendedName>
            <fullName evidence="1">Glucosamine-1-phosphate N-acetyltransferase</fullName>
            <ecNumber evidence="1">2.3.1.157</ecNumber>
        </recommendedName>
    </domain>
</protein>
<dbReference type="EC" id="2.7.7.23" evidence="1"/>
<dbReference type="EC" id="2.3.1.157" evidence="1"/>
<dbReference type="EMBL" id="AP009049">
    <property type="protein sequence ID" value="BAH05172.1"/>
    <property type="molecule type" value="Genomic_DNA"/>
</dbReference>
<dbReference type="RefSeq" id="WP_011988742.1">
    <property type="nucleotide sequence ID" value="NC_011837.1"/>
</dbReference>
<dbReference type="SMR" id="B9DY47"/>
<dbReference type="KEGG" id="ckr:CKR_0121"/>
<dbReference type="HOGENOM" id="CLU_029499_15_2_9"/>
<dbReference type="UniPathway" id="UPA00113">
    <property type="reaction ID" value="UER00532"/>
</dbReference>
<dbReference type="UniPathway" id="UPA00113">
    <property type="reaction ID" value="UER00533"/>
</dbReference>
<dbReference type="UniPathway" id="UPA00973"/>
<dbReference type="Proteomes" id="UP000007969">
    <property type="component" value="Chromosome"/>
</dbReference>
<dbReference type="GO" id="GO:0005737">
    <property type="term" value="C:cytoplasm"/>
    <property type="evidence" value="ECO:0007669"/>
    <property type="project" value="UniProtKB-SubCell"/>
</dbReference>
<dbReference type="GO" id="GO:0016020">
    <property type="term" value="C:membrane"/>
    <property type="evidence" value="ECO:0007669"/>
    <property type="project" value="GOC"/>
</dbReference>
<dbReference type="GO" id="GO:0019134">
    <property type="term" value="F:glucosamine-1-phosphate N-acetyltransferase activity"/>
    <property type="evidence" value="ECO:0007669"/>
    <property type="project" value="UniProtKB-UniRule"/>
</dbReference>
<dbReference type="GO" id="GO:0000287">
    <property type="term" value="F:magnesium ion binding"/>
    <property type="evidence" value="ECO:0007669"/>
    <property type="project" value="UniProtKB-UniRule"/>
</dbReference>
<dbReference type="GO" id="GO:0003977">
    <property type="term" value="F:UDP-N-acetylglucosamine diphosphorylase activity"/>
    <property type="evidence" value="ECO:0007669"/>
    <property type="project" value="UniProtKB-UniRule"/>
</dbReference>
<dbReference type="GO" id="GO:0000902">
    <property type="term" value="P:cell morphogenesis"/>
    <property type="evidence" value="ECO:0007669"/>
    <property type="project" value="UniProtKB-UniRule"/>
</dbReference>
<dbReference type="GO" id="GO:0071555">
    <property type="term" value="P:cell wall organization"/>
    <property type="evidence" value="ECO:0007669"/>
    <property type="project" value="UniProtKB-KW"/>
</dbReference>
<dbReference type="GO" id="GO:0009245">
    <property type="term" value="P:lipid A biosynthetic process"/>
    <property type="evidence" value="ECO:0007669"/>
    <property type="project" value="UniProtKB-UniRule"/>
</dbReference>
<dbReference type="GO" id="GO:0009252">
    <property type="term" value="P:peptidoglycan biosynthetic process"/>
    <property type="evidence" value="ECO:0007669"/>
    <property type="project" value="UniProtKB-UniRule"/>
</dbReference>
<dbReference type="GO" id="GO:0008360">
    <property type="term" value="P:regulation of cell shape"/>
    <property type="evidence" value="ECO:0007669"/>
    <property type="project" value="UniProtKB-KW"/>
</dbReference>
<dbReference type="GO" id="GO:0006048">
    <property type="term" value="P:UDP-N-acetylglucosamine biosynthetic process"/>
    <property type="evidence" value="ECO:0007669"/>
    <property type="project" value="UniProtKB-UniPathway"/>
</dbReference>
<dbReference type="CDD" id="cd02540">
    <property type="entry name" value="GT2_GlmU_N_bac"/>
    <property type="match status" value="1"/>
</dbReference>
<dbReference type="CDD" id="cd03353">
    <property type="entry name" value="LbH_GlmU_C"/>
    <property type="match status" value="1"/>
</dbReference>
<dbReference type="Gene3D" id="2.160.10.10">
    <property type="entry name" value="Hexapeptide repeat proteins"/>
    <property type="match status" value="1"/>
</dbReference>
<dbReference type="Gene3D" id="3.90.550.10">
    <property type="entry name" value="Spore Coat Polysaccharide Biosynthesis Protein SpsA, Chain A"/>
    <property type="match status" value="1"/>
</dbReference>
<dbReference type="HAMAP" id="MF_01631">
    <property type="entry name" value="GlmU"/>
    <property type="match status" value="1"/>
</dbReference>
<dbReference type="InterPro" id="IPR005882">
    <property type="entry name" value="Bifunctional_GlmU"/>
</dbReference>
<dbReference type="InterPro" id="IPR050065">
    <property type="entry name" value="GlmU-like"/>
</dbReference>
<dbReference type="InterPro" id="IPR038009">
    <property type="entry name" value="GlmU_C_LbH"/>
</dbReference>
<dbReference type="InterPro" id="IPR001451">
    <property type="entry name" value="Hexapep"/>
</dbReference>
<dbReference type="InterPro" id="IPR005835">
    <property type="entry name" value="NTP_transferase_dom"/>
</dbReference>
<dbReference type="InterPro" id="IPR029044">
    <property type="entry name" value="Nucleotide-diphossugar_trans"/>
</dbReference>
<dbReference type="InterPro" id="IPR011004">
    <property type="entry name" value="Trimer_LpxA-like_sf"/>
</dbReference>
<dbReference type="NCBIfam" id="TIGR01173">
    <property type="entry name" value="glmU"/>
    <property type="match status" value="1"/>
</dbReference>
<dbReference type="NCBIfam" id="NF010934">
    <property type="entry name" value="PRK14354.1"/>
    <property type="match status" value="1"/>
</dbReference>
<dbReference type="PANTHER" id="PTHR43584:SF3">
    <property type="entry name" value="BIFUNCTIONAL PROTEIN GLMU"/>
    <property type="match status" value="1"/>
</dbReference>
<dbReference type="PANTHER" id="PTHR43584">
    <property type="entry name" value="NUCLEOTIDYL TRANSFERASE"/>
    <property type="match status" value="1"/>
</dbReference>
<dbReference type="Pfam" id="PF00132">
    <property type="entry name" value="Hexapep"/>
    <property type="match status" value="3"/>
</dbReference>
<dbReference type="Pfam" id="PF00483">
    <property type="entry name" value="NTP_transferase"/>
    <property type="match status" value="1"/>
</dbReference>
<dbReference type="SUPFAM" id="SSF53448">
    <property type="entry name" value="Nucleotide-diphospho-sugar transferases"/>
    <property type="match status" value="1"/>
</dbReference>
<dbReference type="SUPFAM" id="SSF51161">
    <property type="entry name" value="Trimeric LpxA-like enzymes"/>
    <property type="match status" value="1"/>
</dbReference>
<evidence type="ECO:0000255" key="1">
    <source>
        <dbReference type="HAMAP-Rule" id="MF_01631"/>
    </source>
</evidence>
<keyword id="KW-0012">Acyltransferase</keyword>
<keyword id="KW-0133">Cell shape</keyword>
<keyword id="KW-0961">Cell wall biogenesis/degradation</keyword>
<keyword id="KW-0963">Cytoplasm</keyword>
<keyword id="KW-0460">Magnesium</keyword>
<keyword id="KW-0479">Metal-binding</keyword>
<keyword id="KW-0511">Multifunctional enzyme</keyword>
<keyword id="KW-0548">Nucleotidyltransferase</keyword>
<keyword id="KW-0573">Peptidoglycan synthesis</keyword>
<keyword id="KW-0677">Repeat</keyword>
<keyword id="KW-0808">Transferase</keyword>
<name>GLMU_CLOK1</name>